<feature type="chain" id="PRO_1000013329" description="Large ribosomal subunit protein bL34">
    <location>
        <begin position="1"/>
        <end position="44"/>
    </location>
</feature>
<proteinExistence type="inferred from homology"/>
<name>RL34_DECAR</name>
<keyword id="KW-0687">Ribonucleoprotein</keyword>
<keyword id="KW-0689">Ribosomal protein</keyword>
<protein>
    <recommendedName>
        <fullName evidence="1">Large ribosomal subunit protein bL34</fullName>
    </recommendedName>
    <alternativeName>
        <fullName evidence="2">50S ribosomal protein L34</fullName>
    </alternativeName>
</protein>
<dbReference type="EMBL" id="CP000089">
    <property type="protein sequence ID" value="AAZ48930.1"/>
    <property type="molecule type" value="Genomic_DNA"/>
</dbReference>
<dbReference type="SMR" id="Q477Q1"/>
<dbReference type="STRING" id="159087.Daro_4204"/>
<dbReference type="KEGG" id="dar:Daro_4204"/>
<dbReference type="eggNOG" id="COG0230">
    <property type="taxonomic scope" value="Bacteria"/>
</dbReference>
<dbReference type="HOGENOM" id="CLU_129938_2_0_4"/>
<dbReference type="OrthoDB" id="9804164at2"/>
<dbReference type="GO" id="GO:1990904">
    <property type="term" value="C:ribonucleoprotein complex"/>
    <property type="evidence" value="ECO:0007669"/>
    <property type="project" value="UniProtKB-KW"/>
</dbReference>
<dbReference type="GO" id="GO:0005840">
    <property type="term" value="C:ribosome"/>
    <property type="evidence" value="ECO:0007669"/>
    <property type="project" value="UniProtKB-KW"/>
</dbReference>
<dbReference type="GO" id="GO:0003735">
    <property type="term" value="F:structural constituent of ribosome"/>
    <property type="evidence" value="ECO:0007669"/>
    <property type="project" value="InterPro"/>
</dbReference>
<dbReference type="GO" id="GO:0006412">
    <property type="term" value="P:translation"/>
    <property type="evidence" value="ECO:0007669"/>
    <property type="project" value="UniProtKB-UniRule"/>
</dbReference>
<dbReference type="FunFam" id="1.10.287.3980:FF:000001">
    <property type="entry name" value="Mitochondrial ribosomal protein L34"/>
    <property type="match status" value="1"/>
</dbReference>
<dbReference type="Gene3D" id="1.10.287.3980">
    <property type="match status" value="1"/>
</dbReference>
<dbReference type="HAMAP" id="MF_00391">
    <property type="entry name" value="Ribosomal_bL34"/>
    <property type="match status" value="1"/>
</dbReference>
<dbReference type="InterPro" id="IPR000271">
    <property type="entry name" value="Ribosomal_bL34"/>
</dbReference>
<dbReference type="InterPro" id="IPR020939">
    <property type="entry name" value="Ribosomal_bL34_CS"/>
</dbReference>
<dbReference type="NCBIfam" id="TIGR01030">
    <property type="entry name" value="rpmH_bact"/>
    <property type="match status" value="1"/>
</dbReference>
<dbReference type="PANTHER" id="PTHR14503:SF4">
    <property type="entry name" value="LARGE RIBOSOMAL SUBUNIT PROTEIN BL34M"/>
    <property type="match status" value="1"/>
</dbReference>
<dbReference type="PANTHER" id="PTHR14503">
    <property type="entry name" value="MITOCHONDRIAL RIBOSOMAL PROTEIN 34 FAMILY MEMBER"/>
    <property type="match status" value="1"/>
</dbReference>
<dbReference type="Pfam" id="PF00468">
    <property type="entry name" value="Ribosomal_L34"/>
    <property type="match status" value="1"/>
</dbReference>
<dbReference type="PROSITE" id="PS00784">
    <property type="entry name" value="RIBOSOMAL_L34"/>
    <property type="match status" value="1"/>
</dbReference>
<accession>Q477Q1</accession>
<organism>
    <name type="scientific">Dechloromonas aromatica (strain RCB)</name>
    <dbReference type="NCBI Taxonomy" id="159087"/>
    <lineage>
        <taxon>Bacteria</taxon>
        <taxon>Pseudomonadati</taxon>
        <taxon>Pseudomonadota</taxon>
        <taxon>Betaproteobacteria</taxon>
        <taxon>Rhodocyclales</taxon>
        <taxon>Azonexaceae</taxon>
        <taxon>Dechloromonas</taxon>
    </lineage>
</organism>
<sequence length="44" mass="5094">MKRTYQPSVVRRKRTHGFLVRMRTKGGRAVIAARRAKGRTRLAV</sequence>
<gene>
    <name evidence="1" type="primary">rpmH</name>
    <name type="ordered locus">Daro_4204</name>
</gene>
<reference key="1">
    <citation type="journal article" date="2009" name="BMC Genomics">
        <title>Metabolic analysis of the soil microbe Dechloromonas aromatica str. RCB: indications of a surprisingly complex life-style and cryptic anaerobic pathways for aromatic degradation.</title>
        <authorList>
            <person name="Salinero K.K."/>
            <person name="Keller K."/>
            <person name="Feil W.S."/>
            <person name="Feil H."/>
            <person name="Trong S."/>
            <person name="Di Bartolo G."/>
            <person name="Lapidus A."/>
        </authorList>
    </citation>
    <scope>NUCLEOTIDE SEQUENCE [LARGE SCALE GENOMIC DNA]</scope>
    <source>
        <strain>RCB</strain>
    </source>
</reference>
<comment type="similarity">
    <text evidence="1">Belongs to the bacterial ribosomal protein bL34 family.</text>
</comment>
<evidence type="ECO:0000255" key="1">
    <source>
        <dbReference type="HAMAP-Rule" id="MF_00391"/>
    </source>
</evidence>
<evidence type="ECO:0000305" key="2"/>